<protein>
    <recommendedName>
        <fullName>Immunoglobulin heavy constant epsilon</fullName>
    </recommendedName>
    <alternativeName>
        <fullName>Ig epsilon chain C region</fullName>
    </alternativeName>
</protein>
<keyword id="KW-0002">3D-structure</keyword>
<keyword id="KW-1003">Cell membrane</keyword>
<keyword id="KW-1015">Disulfide bond</keyword>
<keyword id="KW-0325">Glycoprotein</keyword>
<keyword id="KW-0393">Immunoglobulin domain</keyword>
<keyword id="KW-0472">Membrane</keyword>
<keyword id="KW-1185">Reference proteome</keyword>
<keyword id="KW-0964">Secreted</keyword>
<comment type="function">
    <text evidence="1">Constant region of immunoglobulin heavy chains. Immunoglobulins, also known as antibodies, are membrane-bound or secreted glycoproteins produced by B lymphocytes. In the recognition phase of humoral immunity, the membrane-bound immunoglobulins serve as receptors which, upon binding of a specific antigen, trigger the clonal expansion and differentiation of B lymphocytes into immunoglobulins-secreting plasma cells. Secreted immunoglobulins mediate the effector phase of humoral immunity, which results in the elimination of bound antigens. The antigen binding site is formed by the variable domain of one heavy chain, together with that of its associated light chain. Thus, each immunoglobulin has two antigen binding sites with remarkable affinity for a particular antigen. The variable domains are assembled by a process called V-(D)-J rearrangement and can then be subjected to somatic hypermutations which, after exposure to antigen and selection, allow affinity maturation for a particular antigen.</text>
</comment>
<comment type="subunit">
    <text evidence="1">The basic structural unit consists of two identical heavy chains and two identical light chains; disulfide-linked. N-terminal variable regions of the heavy and light chains form the antigen binding sites, whereas the C-terminal constant regions of the heavy chains interact with immune receptors to mediate effector functions.</text>
</comment>
<comment type="subcellular location">
    <subcellularLocation>
        <location evidence="1">Secreted</location>
    </subcellularLocation>
    <subcellularLocation>
        <location evidence="1">Cell membrane</location>
    </subcellularLocation>
</comment>
<dbReference type="EMBL" id="X01857">
    <property type="protein sequence ID" value="CAA25977.1"/>
    <property type="molecule type" value="Genomic_DNA"/>
</dbReference>
<dbReference type="EMBL" id="X01857">
    <property type="protein sequence ID" value="CAA25978.1"/>
    <property type="molecule type" value="Genomic_DNA"/>
</dbReference>
<dbReference type="PIR" id="A02144">
    <property type="entry name" value="EHMS"/>
</dbReference>
<dbReference type="PIR" id="A02145">
    <property type="entry name" value="EHMSS"/>
</dbReference>
<dbReference type="PDB" id="8K7T">
    <property type="method" value="EM"/>
    <property type="resolution" value="3.71 A"/>
    <property type="chains" value="E/F=91-421"/>
</dbReference>
<dbReference type="PDBsum" id="8K7T"/>
<dbReference type="EMDB" id="EMD-36940"/>
<dbReference type="SMR" id="P06336"/>
<dbReference type="FunCoup" id="P06336">
    <property type="interactions" value="103"/>
</dbReference>
<dbReference type="GlyGen" id="P06336">
    <property type="glycosylation" value="9 sites"/>
</dbReference>
<dbReference type="PaxDb" id="10090-ENSMUSP00000118012"/>
<dbReference type="AGR" id="MGI:2685746"/>
<dbReference type="MGI" id="MGI:2685746">
    <property type="gene designation" value="Ighe"/>
</dbReference>
<dbReference type="eggNOG" id="ENOG502R54U">
    <property type="taxonomic scope" value="Eukaryota"/>
</dbReference>
<dbReference type="InParanoid" id="P06336"/>
<dbReference type="Reactome" id="R-MMU-2454202">
    <property type="pathway name" value="Fc epsilon receptor (FCERI) signaling"/>
</dbReference>
<dbReference type="Reactome" id="R-MMU-2730905">
    <property type="pathway name" value="Role of LAT2/NTAL/LAB on calcium mobilization"/>
</dbReference>
<dbReference type="Reactome" id="R-MMU-2871796">
    <property type="pathway name" value="FCERI mediated MAPK activation"/>
</dbReference>
<dbReference type="Reactome" id="R-MMU-2871809">
    <property type="pathway name" value="FCERI mediated Ca+2 mobilization"/>
</dbReference>
<dbReference type="Reactome" id="R-MMU-2871837">
    <property type="pathway name" value="FCERI mediated NF-kB activation"/>
</dbReference>
<dbReference type="PRO" id="PR:P06336"/>
<dbReference type="Proteomes" id="UP000000589">
    <property type="component" value="Unplaced"/>
</dbReference>
<dbReference type="RNAct" id="P06336">
    <property type="molecule type" value="protein"/>
</dbReference>
<dbReference type="GO" id="GO:0005737">
    <property type="term" value="C:cytoplasm"/>
    <property type="evidence" value="ECO:0000314"/>
    <property type="project" value="MGI"/>
</dbReference>
<dbReference type="GO" id="GO:0005576">
    <property type="term" value="C:extracellular region"/>
    <property type="evidence" value="ECO:0007669"/>
    <property type="project" value="UniProtKB-SubCell"/>
</dbReference>
<dbReference type="GO" id="GO:0005886">
    <property type="term" value="C:plasma membrane"/>
    <property type="evidence" value="ECO:0007669"/>
    <property type="project" value="UniProtKB-SubCell"/>
</dbReference>
<dbReference type="GO" id="GO:0030183">
    <property type="term" value="P:B cell differentiation"/>
    <property type="evidence" value="ECO:0000315"/>
    <property type="project" value="MGI"/>
</dbReference>
<dbReference type="CDD" id="cd05847">
    <property type="entry name" value="IgC1_CH2_IgE"/>
    <property type="match status" value="1"/>
</dbReference>
<dbReference type="CDD" id="cd07696">
    <property type="entry name" value="IgC1_CH3_IgAEM_CH2_IgG"/>
    <property type="match status" value="1"/>
</dbReference>
<dbReference type="FunFam" id="2.60.40.10:FF:000998">
    <property type="entry name" value="Immunoglobulin heavy constant epsilon"/>
    <property type="match status" value="1"/>
</dbReference>
<dbReference type="FunFam" id="2.60.40.10:FF:001690">
    <property type="entry name" value="Immunoglobulin heavy constant epsilon"/>
    <property type="match status" value="1"/>
</dbReference>
<dbReference type="FunFam" id="2.60.40.10:FF:000463">
    <property type="entry name" value="Immunoglobulin heavy constant gamma 1"/>
    <property type="match status" value="1"/>
</dbReference>
<dbReference type="Gene3D" id="2.60.40.10">
    <property type="entry name" value="Immunoglobulins"/>
    <property type="match status" value="4"/>
</dbReference>
<dbReference type="InterPro" id="IPR007110">
    <property type="entry name" value="Ig-like_dom"/>
</dbReference>
<dbReference type="InterPro" id="IPR036179">
    <property type="entry name" value="Ig-like_dom_sf"/>
</dbReference>
<dbReference type="InterPro" id="IPR013783">
    <property type="entry name" value="Ig-like_fold"/>
</dbReference>
<dbReference type="InterPro" id="IPR003006">
    <property type="entry name" value="Ig/MHC_CS"/>
</dbReference>
<dbReference type="InterPro" id="IPR003597">
    <property type="entry name" value="Ig_C1-set"/>
</dbReference>
<dbReference type="InterPro" id="IPR050380">
    <property type="entry name" value="Immune_Resp_Modulators"/>
</dbReference>
<dbReference type="InterPro" id="IPR013151">
    <property type="entry name" value="Immunoglobulin_dom"/>
</dbReference>
<dbReference type="PANTHER" id="PTHR23411">
    <property type="entry name" value="TAPASIN"/>
    <property type="match status" value="1"/>
</dbReference>
<dbReference type="Pfam" id="PF07654">
    <property type="entry name" value="C1-set"/>
    <property type="match status" value="3"/>
</dbReference>
<dbReference type="Pfam" id="PF00047">
    <property type="entry name" value="ig"/>
    <property type="match status" value="1"/>
</dbReference>
<dbReference type="SMART" id="SM00407">
    <property type="entry name" value="IGc1"/>
    <property type="match status" value="4"/>
</dbReference>
<dbReference type="SUPFAM" id="SSF48726">
    <property type="entry name" value="Immunoglobulin"/>
    <property type="match status" value="4"/>
</dbReference>
<dbReference type="PROSITE" id="PS50835">
    <property type="entry name" value="IG_LIKE"/>
    <property type="match status" value="4"/>
</dbReference>
<dbReference type="PROSITE" id="PS00290">
    <property type="entry name" value="IG_MHC"/>
    <property type="match status" value="3"/>
</dbReference>
<name>IGHE_MOUSE</name>
<evidence type="ECO:0000250" key="1">
    <source>
        <dbReference type="UniProtKB" id="P01854"/>
    </source>
</evidence>
<evidence type="ECO:0000255" key="2"/>
<evidence type="ECO:0000255" key="3">
    <source>
        <dbReference type="PROSITE-ProRule" id="PRU00114"/>
    </source>
</evidence>
<evidence type="ECO:0000312" key="4">
    <source>
        <dbReference type="MGI" id="MGI:2685746"/>
    </source>
</evidence>
<feature type="chain" id="PRO_0000153575" description="Immunoglobulin heavy constant epsilon">
    <location>
        <begin position="1" status="less than"/>
        <end position="421"/>
    </location>
</feature>
<feature type="domain" description="Ig-like 1" evidence="3">
    <location>
        <begin position="5"/>
        <end position="97"/>
    </location>
</feature>
<feature type="domain" description="Ig-like 2" evidence="3">
    <location>
        <begin position="99"/>
        <end position="184"/>
    </location>
</feature>
<feature type="domain" description="Ig-like 3" evidence="3">
    <location>
        <begin position="201"/>
        <end position="301"/>
    </location>
</feature>
<feature type="domain" description="Ig-like 4" evidence="3">
    <location>
        <begin position="310"/>
        <end position="410"/>
    </location>
</feature>
<feature type="glycosylation site" description="N-linked (GlcNAc...) asparagine" evidence="2">
    <location>
        <position position="43"/>
    </location>
</feature>
<feature type="glycosylation site" description="N-linked (GlcNAc...) asparagine" evidence="2">
    <location>
        <position position="72"/>
    </location>
</feature>
<feature type="glycosylation site" description="N-linked (GlcNAc...) asparagine" evidence="2">
    <location>
        <position position="84"/>
    </location>
</feature>
<feature type="glycosylation site" description="N-linked (GlcNAc...) asparagine" evidence="2">
    <location>
        <position position="95"/>
    </location>
</feature>
<feature type="glycosylation site" description="N-linked (GlcNAc...) asparagine" evidence="2">
    <location>
        <position position="166"/>
    </location>
</feature>
<feature type="glycosylation site" description="N-linked (GlcNAc...) asparagine" evidence="2">
    <location>
        <position position="238"/>
    </location>
</feature>
<feature type="glycosylation site" description="N-linked (GlcNAc...) asparagine" evidence="2">
    <location>
        <position position="261"/>
    </location>
</feature>
<feature type="glycosylation site" description="N-linked (GlcNAc...) asparagine" evidence="2">
    <location>
        <position position="365"/>
    </location>
</feature>
<feature type="glycosylation site" description="N-linked (GlcNAc...) asparagine" evidence="2">
    <location>
        <position position="415"/>
    </location>
</feature>
<feature type="disulfide bond" evidence="3">
    <location>
        <begin position="23"/>
        <end position="75"/>
    </location>
</feature>
<feature type="disulfide bond" evidence="3">
    <location>
        <begin position="121"/>
        <end position="180"/>
    </location>
</feature>
<feature type="disulfide bond" evidence="3">
    <location>
        <begin position="226"/>
        <end position="285"/>
    </location>
</feature>
<feature type="disulfide bond" evidence="3">
    <location>
        <begin position="330"/>
        <end position="392"/>
    </location>
</feature>
<feature type="non-terminal residue">
    <location>
        <position position="1"/>
    </location>
</feature>
<proteinExistence type="evidence at protein level"/>
<organism>
    <name type="scientific">Mus musculus</name>
    <name type="common">Mouse</name>
    <dbReference type="NCBI Taxonomy" id="10090"/>
    <lineage>
        <taxon>Eukaryota</taxon>
        <taxon>Metazoa</taxon>
        <taxon>Chordata</taxon>
        <taxon>Craniata</taxon>
        <taxon>Vertebrata</taxon>
        <taxon>Euteleostomi</taxon>
        <taxon>Mammalia</taxon>
        <taxon>Eutheria</taxon>
        <taxon>Euarchontoglires</taxon>
        <taxon>Glires</taxon>
        <taxon>Rodentia</taxon>
        <taxon>Myomorpha</taxon>
        <taxon>Muroidea</taxon>
        <taxon>Muridae</taxon>
        <taxon>Murinae</taxon>
        <taxon>Mus</taxon>
        <taxon>Mus</taxon>
    </lineage>
</organism>
<accession>P06336</accession>
<accession>P01856</accession>
<sequence>SIRNPQLYPLKPCKGTASMTLGCLVKDYFPNPVTVTWYSDSLNMSTVNFPALGSELKVTTSQVTSWGKSAKNFTCHVTHPPSFNESRTILVRPVNITEPTLELLHSSCDPNAFHSTIQLYCFIYGHILNDVSVSWLMDDREITDTLAQTVLIKEEGKLASTCSKLNITEQQWMSESTFTCKVTSQGVDYLAHTRRCPDHEPRGVITYLIPPSPLDLYQNGAPKLTCLVVDLESEKNVNVTWNQEKKTSVSASQWYTKHHNNATTSITSILPVVAKDWIEGYGYQCIVDHPDFPKPIVRSITKTPGQRSAPEVYVFPPPEEESEDKRTLTCLIQNFFPEDISVQWLGDGKLISNSQHSTTTPLKSNGSNQGFFIFSRLEVAKTLWTQRKQFTCQVIHEALQKPRKLEKTISTSLGNTSLRPS</sequence>
<gene>
    <name evidence="4" type="primary">IGHE</name>
</gene>
<reference key="1">
    <citation type="journal article" date="1982" name="EMBO J.">
        <title>The nucleotide sequence of the mouse immunoglobulin epsilon gene: comparison with the human epsilon gene sequence.</title>
        <authorList>
            <person name="Ishida N."/>
            <person name="Ueda S."/>
            <person name="Hayashida H."/>
            <person name="Miyata T."/>
            <person name="Honjo T."/>
        </authorList>
    </citation>
    <scope>NUCLEOTIDE SEQUENCE [GENOMIC DNA]</scope>
</reference>
<reference key="2">
    <citation type="submission" date="1986-04" db="EMBL/GenBank/DDBJ databases">
        <authorList>
            <person name="Honjo T."/>
        </authorList>
    </citation>
    <scope>SEQUENCE REVISION</scope>
</reference>
<reference key="3">
    <citation type="journal article" date="1982" name="Proc. Natl. Acad. Sci. U.S.A.">
        <title>Cloning and nucleotide sequence of mouse immunoglobulin epsilon chain cDNA.</title>
        <authorList>
            <person name="Liu F.-T."/>
            <person name="Albrandt K."/>
            <person name="Sutcliffe J.G."/>
            <person name="Katz D.H."/>
        </authorList>
    </citation>
    <scope>NUCLEOTIDE SEQUENCE [GENOMIC DNA] OF 34-421</scope>
</reference>